<protein>
    <recommendedName>
        <fullName evidence="1">Large ribosomal subunit protein bL31</fullName>
    </recommendedName>
    <alternativeName>
        <fullName evidence="2">50S ribosomal protein L31</fullName>
    </alternativeName>
</protein>
<evidence type="ECO:0000255" key="1">
    <source>
        <dbReference type="HAMAP-Rule" id="MF_00501"/>
    </source>
</evidence>
<evidence type="ECO:0000305" key="2"/>
<gene>
    <name evidence="1" type="primary">rpmE</name>
    <name type="ordered locus">CLI_0190</name>
</gene>
<accession>A7G9N8</accession>
<organism>
    <name type="scientific">Clostridium botulinum (strain Langeland / NCTC 10281 / Type F)</name>
    <dbReference type="NCBI Taxonomy" id="441772"/>
    <lineage>
        <taxon>Bacteria</taxon>
        <taxon>Bacillati</taxon>
        <taxon>Bacillota</taxon>
        <taxon>Clostridia</taxon>
        <taxon>Eubacteriales</taxon>
        <taxon>Clostridiaceae</taxon>
        <taxon>Clostridium</taxon>
    </lineage>
</organism>
<reference key="1">
    <citation type="submission" date="2007-06" db="EMBL/GenBank/DDBJ databases">
        <authorList>
            <person name="Brinkac L.M."/>
            <person name="Daugherty S."/>
            <person name="Dodson R.J."/>
            <person name="Madupu R."/>
            <person name="Brown J.L."/>
            <person name="Bruce D."/>
            <person name="Detter C."/>
            <person name="Munk C."/>
            <person name="Smith L.A."/>
            <person name="Smith T.J."/>
            <person name="White O."/>
            <person name="Brettin T.S."/>
        </authorList>
    </citation>
    <scope>NUCLEOTIDE SEQUENCE [LARGE SCALE GENOMIC DNA]</scope>
    <source>
        <strain>Langeland / NCTC 10281 / Type F</strain>
    </source>
</reference>
<feature type="chain" id="PRO_1000126594" description="Large ribosomal subunit protein bL31">
    <location>
        <begin position="1"/>
        <end position="72"/>
    </location>
</feature>
<feature type="binding site" evidence="1">
    <location>
        <position position="17"/>
    </location>
    <ligand>
        <name>Zn(2+)</name>
        <dbReference type="ChEBI" id="CHEBI:29105"/>
    </ligand>
</feature>
<feature type="binding site" evidence="1">
    <location>
        <position position="19"/>
    </location>
    <ligand>
        <name>Zn(2+)</name>
        <dbReference type="ChEBI" id="CHEBI:29105"/>
    </ligand>
</feature>
<feature type="binding site" evidence="1">
    <location>
        <position position="37"/>
    </location>
    <ligand>
        <name>Zn(2+)</name>
        <dbReference type="ChEBI" id="CHEBI:29105"/>
    </ligand>
</feature>
<feature type="binding site" evidence="1">
    <location>
        <position position="40"/>
    </location>
    <ligand>
        <name>Zn(2+)</name>
        <dbReference type="ChEBI" id="CHEBI:29105"/>
    </ligand>
</feature>
<dbReference type="EMBL" id="CP000728">
    <property type="protein sequence ID" value="ABS40803.1"/>
    <property type="molecule type" value="Genomic_DNA"/>
</dbReference>
<dbReference type="RefSeq" id="WP_003355803.1">
    <property type="nucleotide sequence ID" value="NC_009699.1"/>
</dbReference>
<dbReference type="GeneID" id="5184390"/>
<dbReference type="KEGG" id="cbf:CLI_0190"/>
<dbReference type="HOGENOM" id="CLU_114306_4_3_9"/>
<dbReference type="Proteomes" id="UP000002410">
    <property type="component" value="Chromosome"/>
</dbReference>
<dbReference type="GO" id="GO:1990904">
    <property type="term" value="C:ribonucleoprotein complex"/>
    <property type="evidence" value="ECO:0007669"/>
    <property type="project" value="UniProtKB-KW"/>
</dbReference>
<dbReference type="GO" id="GO:0005840">
    <property type="term" value="C:ribosome"/>
    <property type="evidence" value="ECO:0007669"/>
    <property type="project" value="UniProtKB-KW"/>
</dbReference>
<dbReference type="GO" id="GO:0046872">
    <property type="term" value="F:metal ion binding"/>
    <property type="evidence" value="ECO:0007669"/>
    <property type="project" value="UniProtKB-KW"/>
</dbReference>
<dbReference type="GO" id="GO:0019843">
    <property type="term" value="F:rRNA binding"/>
    <property type="evidence" value="ECO:0007669"/>
    <property type="project" value="UniProtKB-KW"/>
</dbReference>
<dbReference type="GO" id="GO:0003735">
    <property type="term" value="F:structural constituent of ribosome"/>
    <property type="evidence" value="ECO:0007669"/>
    <property type="project" value="InterPro"/>
</dbReference>
<dbReference type="GO" id="GO:0006412">
    <property type="term" value="P:translation"/>
    <property type="evidence" value="ECO:0007669"/>
    <property type="project" value="UniProtKB-UniRule"/>
</dbReference>
<dbReference type="Gene3D" id="4.10.830.30">
    <property type="entry name" value="Ribosomal protein L31"/>
    <property type="match status" value="1"/>
</dbReference>
<dbReference type="HAMAP" id="MF_00501">
    <property type="entry name" value="Ribosomal_bL31_1"/>
    <property type="match status" value="1"/>
</dbReference>
<dbReference type="InterPro" id="IPR034704">
    <property type="entry name" value="Ribosomal_bL28/bL31-like_sf"/>
</dbReference>
<dbReference type="InterPro" id="IPR002150">
    <property type="entry name" value="Ribosomal_bL31"/>
</dbReference>
<dbReference type="InterPro" id="IPR027491">
    <property type="entry name" value="Ribosomal_bL31_A"/>
</dbReference>
<dbReference type="InterPro" id="IPR042105">
    <property type="entry name" value="Ribosomal_bL31_sf"/>
</dbReference>
<dbReference type="NCBIfam" id="TIGR00105">
    <property type="entry name" value="L31"/>
    <property type="match status" value="1"/>
</dbReference>
<dbReference type="NCBIfam" id="NF000612">
    <property type="entry name" value="PRK00019.1"/>
    <property type="match status" value="1"/>
</dbReference>
<dbReference type="NCBIfam" id="NF001809">
    <property type="entry name" value="PRK00528.1"/>
    <property type="match status" value="1"/>
</dbReference>
<dbReference type="PANTHER" id="PTHR33280">
    <property type="entry name" value="50S RIBOSOMAL PROTEIN L31, CHLOROPLASTIC"/>
    <property type="match status" value="1"/>
</dbReference>
<dbReference type="PANTHER" id="PTHR33280:SF1">
    <property type="entry name" value="LARGE RIBOSOMAL SUBUNIT PROTEIN BL31C"/>
    <property type="match status" value="1"/>
</dbReference>
<dbReference type="Pfam" id="PF01197">
    <property type="entry name" value="Ribosomal_L31"/>
    <property type="match status" value="1"/>
</dbReference>
<dbReference type="PRINTS" id="PR01249">
    <property type="entry name" value="RIBOSOMALL31"/>
</dbReference>
<dbReference type="SUPFAM" id="SSF143800">
    <property type="entry name" value="L28p-like"/>
    <property type="match status" value="1"/>
</dbReference>
<dbReference type="PROSITE" id="PS01143">
    <property type="entry name" value="RIBOSOMAL_L31"/>
    <property type="match status" value="1"/>
</dbReference>
<sequence length="72" mass="8107">MREGIHPEYNHDVVVKCACGNTFTTGSTNKELKVEICSKCHPFFTGKQKIVDAGGRVDKFMKKFNLSNEDVK</sequence>
<keyword id="KW-0479">Metal-binding</keyword>
<keyword id="KW-0687">Ribonucleoprotein</keyword>
<keyword id="KW-0689">Ribosomal protein</keyword>
<keyword id="KW-0694">RNA-binding</keyword>
<keyword id="KW-0699">rRNA-binding</keyword>
<keyword id="KW-0862">Zinc</keyword>
<name>RL31_CLOBL</name>
<proteinExistence type="inferred from homology"/>
<comment type="function">
    <text evidence="1">Binds the 23S rRNA.</text>
</comment>
<comment type="cofactor">
    <cofactor evidence="1">
        <name>Zn(2+)</name>
        <dbReference type="ChEBI" id="CHEBI:29105"/>
    </cofactor>
    <text evidence="1">Binds 1 zinc ion per subunit.</text>
</comment>
<comment type="subunit">
    <text evidence="1">Part of the 50S ribosomal subunit.</text>
</comment>
<comment type="similarity">
    <text evidence="1">Belongs to the bacterial ribosomal protein bL31 family. Type A subfamily.</text>
</comment>